<proteinExistence type="evidence at protein level"/>
<dbReference type="EMBL" id="L29189">
    <property type="protein sequence ID" value="AAA20555.1"/>
    <property type="molecule type" value="Genomic_DNA"/>
</dbReference>
<dbReference type="EMBL" id="AL009126">
    <property type="protein sequence ID" value="CAB15103.1"/>
    <property type="molecule type" value="Genomic_DNA"/>
</dbReference>
<dbReference type="PIR" id="C54078">
    <property type="entry name" value="C54078"/>
</dbReference>
<dbReference type="RefSeq" id="NP_391003.1">
    <property type="nucleotide sequence ID" value="NC_000964.3"/>
</dbReference>
<dbReference type="RefSeq" id="WP_003243846.1">
    <property type="nucleotide sequence ID" value="NZ_OZ025638.1"/>
</dbReference>
<dbReference type="SMR" id="P39216"/>
<dbReference type="DIP" id="DIP-61107N"/>
<dbReference type="FunCoup" id="P39216">
    <property type="interactions" value="174"/>
</dbReference>
<dbReference type="IntAct" id="P39216">
    <property type="interactions" value="17"/>
</dbReference>
<dbReference type="STRING" id="224308.BSU31250"/>
<dbReference type="PaxDb" id="224308-BSU31250"/>
<dbReference type="EnsemblBacteria" id="CAB15103">
    <property type="protein sequence ID" value="CAB15103"/>
    <property type="gene ID" value="BSU_31250"/>
</dbReference>
<dbReference type="GeneID" id="938840"/>
<dbReference type="KEGG" id="bsu:BSU31250"/>
<dbReference type="PATRIC" id="fig|224308.179.peg.3385"/>
<dbReference type="eggNOG" id="COG0840">
    <property type="taxonomic scope" value="Bacteria"/>
</dbReference>
<dbReference type="InParanoid" id="P39216"/>
<dbReference type="OrthoDB" id="9760371at2"/>
<dbReference type="PhylomeDB" id="P39216"/>
<dbReference type="BioCyc" id="BSUB:BSU31250-MONOMER"/>
<dbReference type="Proteomes" id="UP000001570">
    <property type="component" value="Chromosome"/>
</dbReference>
<dbReference type="GO" id="GO:0005886">
    <property type="term" value="C:plasma membrane"/>
    <property type="evidence" value="ECO:0007669"/>
    <property type="project" value="UniProtKB-SubCell"/>
</dbReference>
<dbReference type="GO" id="GO:0006935">
    <property type="term" value="P:chemotaxis"/>
    <property type="evidence" value="ECO:0000318"/>
    <property type="project" value="GO_Central"/>
</dbReference>
<dbReference type="GO" id="GO:0007165">
    <property type="term" value="P:signal transduction"/>
    <property type="evidence" value="ECO:0007669"/>
    <property type="project" value="UniProtKB-KW"/>
</dbReference>
<dbReference type="CDD" id="cd06225">
    <property type="entry name" value="HAMP"/>
    <property type="match status" value="1"/>
</dbReference>
<dbReference type="CDD" id="cd11386">
    <property type="entry name" value="MCP_signal"/>
    <property type="match status" value="1"/>
</dbReference>
<dbReference type="CDD" id="cd18773">
    <property type="entry name" value="PDC1_HK_sensor"/>
    <property type="match status" value="1"/>
</dbReference>
<dbReference type="CDD" id="cd12912">
    <property type="entry name" value="PDC2_MCP_like"/>
    <property type="match status" value="1"/>
</dbReference>
<dbReference type="FunFam" id="1.10.8.500:FF:000002">
    <property type="entry name" value="Methyl-accepting chemotaxis protein"/>
    <property type="match status" value="1"/>
</dbReference>
<dbReference type="Gene3D" id="1.10.8.500">
    <property type="entry name" value="HAMP domain in histidine kinase"/>
    <property type="match status" value="1"/>
</dbReference>
<dbReference type="Gene3D" id="1.10.287.950">
    <property type="entry name" value="Methyl-accepting chemotaxis protein"/>
    <property type="match status" value="1"/>
</dbReference>
<dbReference type="Gene3D" id="3.30.450.20">
    <property type="entry name" value="PAS domain"/>
    <property type="match status" value="2"/>
</dbReference>
<dbReference type="InterPro" id="IPR033479">
    <property type="entry name" value="dCache_1"/>
</dbReference>
<dbReference type="InterPro" id="IPR003660">
    <property type="entry name" value="HAMP_dom"/>
</dbReference>
<dbReference type="InterPro" id="IPR004089">
    <property type="entry name" value="MCPsignal_dom"/>
</dbReference>
<dbReference type="InterPro" id="IPR029151">
    <property type="entry name" value="Sensor-like_sf"/>
</dbReference>
<dbReference type="InterPro" id="IPR003122">
    <property type="entry name" value="Tar_rcpt_lig-bd"/>
</dbReference>
<dbReference type="PANTHER" id="PTHR32089">
    <property type="entry name" value="METHYL-ACCEPTING CHEMOTAXIS PROTEIN MCPB"/>
    <property type="match status" value="1"/>
</dbReference>
<dbReference type="PANTHER" id="PTHR32089:SF114">
    <property type="entry name" value="METHYL-ACCEPTING CHEMOTAXIS PROTEIN MCPB"/>
    <property type="match status" value="1"/>
</dbReference>
<dbReference type="Pfam" id="PF02743">
    <property type="entry name" value="dCache_1"/>
    <property type="match status" value="1"/>
</dbReference>
<dbReference type="Pfam" id="PF00672">
    <property type="entry name" value="HAMP"/>
    <property type="match status" value="1"/>
</dbReference>
<dbReference type="Pfam" id="PF00015">
    <property type="entry name" value="MCPsignal"/>
    <property type="match status" value="1"/>
</dbReference>
<dbReference type="SMART" id="SM00304">
    <property type="entry name" value="HAMP"/>
    <property type="match status" value="1"/>
</dbReference>
<dbReference type="SMART" id="SM00283">
    <property type="entry name" value="MA"/>
    <property type="match status" value="1"/>
</dbReference>
<dbReference type="SMART" id="SM00319">
    <property type="entry name" value="TarH"/>
    <property type="match status" value="1"/>
</dbReference>
<dbReference type="SUPFAM" id="SSF58104">
    <property type="entry name" value="Methyl-accepting chemotaxis protein (MCP) signaling domain"/>
    <property type="match status" value="1"/>
</dbReference>
<dbReference type="SUPFAM" id="SSF103190">
    <property type="entry name" value="Sensory domain-like"/>
    <property type="match status" value="1"/>
</dbReference>
<dbReference type="PROSITE" id="PS50111">
    <property type="entry name" value="CHEMOTAXIS_TRANSDUC_2"/>
    <property type="match status" value="1"/>
</dbReference>
<dbReference type="PROSITE" id="PS50885">
    <property type="entry name" value="HAMP"/>
    <property type="match status" value="1"/>
</dbReference>
<gene>
    <name evidence="6" type="primary">tlpA</name>
    <name type="ordered locus">BSU31250</name>
</gene>
<evidence type="ECO:0000250" key="1"/>
<evidence type="ECO:0000255" key="2"/>
<evidence type="ECO:0000255" key="3">
    <source>
        <dbReference type="PROSITE-ProRule" id="PRU00102"/>
    </source>
</evidence>
<evidence type="ECO:0000255" key="4">
    <source>
        <dbReference type="PROSITE-ProRule" id="PRU00284"/>
    </source>
</evidence>
<evidence type="ECO:0000269" key="5">
    <source>
    </source>
</evidence>
<evidence type="ECO:0000303" key="6">
    <source>
    </source>
</evidence>
<evidence type="ECO:0000305" key="7"/>
<feature type="chain" id="PRO_0000110559" description="Methyl-accepting chemotaxis protein TlpA">
    <location>
        <begin position="1"/>
        <end position="662"/>
    </location>
</feature>
<feature type="topological domain" description="Cytoplasmic" evidence="2">
    <location>
        <begin position="1"/>
        <end position="16"/>
    </location>
</feature>
<feature type="transmembrane region" description="Helical" evidence="2">
    <location>
        <begin position="17"/>
        <end position="37"/>
    </location>
</feature>
<feature type="topological domain" description="Extracellular" evidence="2">
    <location>
        <begin position="38"/>
        <end position="281"/>
    </location>
</feature>
<feature type="transmembrane region" description="Helical" evidence="2">
    <location>
        <begin position="282"/>
        <end position="302"/>
    </location>
</feature>
<feature type="topological domain" description="Cytoplasmic" evidence="2">
    <location>
        <begin position="303"/>
        <end position="662"/>
    </location>
</feature>
<feature type="domain" description="Cache">
    <location>
        <begin position="152"/>
        <end position="228"/>
    </location>
</feature>
<feature type="domain" description="HAMP" evidence="3">
    <location>
        <begin position="303"/>
        <end position="355"/>
    </location>
</feature>
<feature type="domain" description="Methyl-accepting transducer" evidence="4">
    <location>
        <begin position="374"/>
        <end position="610"/>
    </location>
</feature>
<feature type="modified residue" description="Glutamate methyl ester (Glu)" evidence="1">
    <location>
        <position position="370"/>
    </location>
</feature>
<feature type="modified residue" description="Glutamate methyl ester (Glu)" evidence="1">
    <location>
        <position position="594"/>
    </location>
</feature>
<feature type="modified residue" description="Glutamate methyl ester (Glu)" evidence="1">
    <location>
        <position position="629"/>
    </location>
</feature>
<feature type="modified residue" description="Glutamate methyl ester (Glu)" evidence="1">
    <location>
        <position position="636"/>
    </location>
</feature>
<keyword id="KW-1003">Cell membrane</keyword>
<keyword id="KW-0145">Chemotaxis</keyword>
<keyword id="KW-0472">Membrane</keyword>
<keyword id="KW-0488">Methylation</keyword>
<keyword id="KW-1185">Reference proteome</keyword>
<keyword id="KW-0807">Transducer</keyword>
<keyword id="KW-0812">Transmembrane</keyword>
<keyword id="KW-1133">Transmembrane helix</keyword>
<protein>
    <recommendedName>
        <fullName>Methyl-accepting chemotaxis protein TlpA</fullName>
    </recommendedName>
</protein>
<comment type="function">
    <text>Chemotactic-signal transducers respond to changes in the concentration of attractants and repellents in the environment, transduce a signal from the outside to the inside of the cell, and facilitate sensory adaptation through the variation of the level of methylation. All amino acids serve as attractants in B.subtilis, they appear to cause an increase in the turnover methyl groups, leading to methylation of an unidentified acceptor, while repellents have been shown to cause a decrease in methyl group turnover. The methyl groups are added by a methyltransferase and removed by a methylesterase.</text>
</comment>
<comment type="subunit">
    <text evidence="5">Interacts with YabA (PubMed:12060778).</text>
</comment>
<comment type="subcellular location">
    <subcellularLocation>
        <location evidence="7">Cell membrane</location>
        <topology evidence="7">Multi-pass membrane protein</topology>
    </subcellularLocation>
</comment>
<comment type="similarity">
    <text evidence="7">Belongs to the methyl-accepting chemotaxis (MCP) protein family.</text>
</comment>
<accession>P39216</accession>
<reference key="1">
    <citation type="journal article" date="1994" name="J. Biol. Chem.">
        <title>Cloning and characterization of genes encoding methyl-accepting chemotaxis proteins in Bacillus subtilis.</title>
        <authorList>
            <person name="Hanlon D.W."/>
            <person name="Ordal G.W."/>
        </authorList>
    </citation>
    <scope>NUCLEOTIDE SEQUENCE [GENOMIC DNA]</scope>
    <source>
        <strain>168 / OI1085</strain>
    </source>
</reference>
<reference key="2">
    <citation type="journal article" date="1997" name="Nature">
        <title>The complete genome sequence of the Gram-positive bacterium Bacillus subtilis.</title>
        <authorList>
            <person name="Kunst F."/>
            <person name="Ogasawara N."/>
            <person name="Moszer I."/>
            <person name="Albertini A.M."/>
            <person name="Alloni G."/>
            <person name="Azevedo V."/>
            <person name="Bertero M.G."/>
            <person name="Bessieres P."/>
            <person name="Bolotin A."/>
            <person name="Borchert S."/>
            <person name="Borriss R."/>
            <person name="Boursier L."/>
            <person name="Brans A."/>
            <person name="Braun M."/>
            <person name="Brignell S.C."/>
            <person name="Bron S."/>
            <person name="Brouillet S."/>
            <person name="Bruschi C.V."/>
            <person name="Caldwell B."/>
            <person name="Capuano V."/>
            <person name="Carter N.M."/>
            <person name="Choi S.-K."/>
            <person name="Codani J.-J."/>
            <person name="Connerton I.F."/>
            <person name="Cummings N.J."/>
            <person name="Daniel R.A."/>
            <person name="Denizot F."/>
            <person name="Devine K.M."/>
            <person name="Duesterhoeft A."/>
            <person name="Ehrlich S.D."/>
            <person name="Emmerson P.T."/>
            <person name="Entian K.-D."/>
            <person name="Errington J."/>
            <person name="Fabret C."/>
            <person name="Ferrari E."/>
            <person name="Foulger D."/>
            <person name="Fritz C."/>
            <person name="Fujita M."/>
            <person name="Fujita Y."/>
            <person name="Fuma S."/>
            <person name="Galizzi A."/>
            <person name="Galleron N."/>
            <person name="Ghim S.-Y."/>
            <person name="Glaser P."/>
            <person name="Goffeau A."/>
            <person name="Golightly E.J."/>
            <person name="Grandi G."/>
            <person name="Guiseppi G."/>
            <person name="Guy B.J."/>
            <person name="Haga K."/>
            <person name="Haiech J."/>
            <person name="Harwood C.R."/>
            <person name="Henaut A."/>
            <person name="Hilbert H."/>
            <person name="Holsappel S."/>
            <person name="Hosono S."/>
            <person name="Hullo M.-F."/>
            <person name="Itaya M."/>
            <person name="Jones L.-M."/>
            <person name="Joris B."/>
            <person name="Karamata D."/>
            <person name="Kasahara Y."/>
            <person name="Klaerr-Blanchard M."/>
            <person name="Klein C."/>
            <person name="Kobayashi Y."/>
            <person name="Koetter P."/>
            <person name="Koningstein G."/>
            <person name="Krogh S."/>
            <person name="Kumano M."/>
            <person name="Kurita K."/>
            <person name="Lapidus A."/>
            <person name="Lardinois S."/>
            <person name="Lauber J."/>
            <person name="Lazarevic V."/>
            <person name="Lee S.-M."/>
            <person name="Levine A."/>
            <person name="Liu H."/>
            <person name="Masuda S."/>
            <person name="Mauel C."/>
            <person name="Medigue C."/>
            <person name="Medina N."/>
            <person name="Mellado R.P."/>
            <person name="Mizuno M."/>
            <person name="Moestl D."/>
            <person name="Nakai S."/>
            <person name="Noback M."/>
            <person name="Noone D."/>
            <person name="O'Reilly M."/>
            <person name="Ogawa K."/>
            <person name="Ogiwara A."/>
            <person name="Oudega B."/>
            <person name="Park S.-H."/>
            <person name="Parro V."/>
            <person name="Pohl T.M."/>
            <person name="Portetelle D."/>
            <person name="Porwollik S."/>
            <person name="Prescott A.M."/>
            <person name="Presecan E."/>
            <person name="Pujic P."/>
            <person name="Purnelle B."/>
            <person name="Rapoport G."/>
            <person name="Rey M."/>
            <person name="Reynolds S."/>
            <person name="Rieger M."/>
            <person name="Rivolta C."/>
            <person name="Rocha E."/>
            <person name="Roche B."/>
            <person name="Rose M."/>
            <person name="Sadaie Y."/>
            <person name="Sato T."/>
            <person name="Scanlan E."/>
            <person name="Schleich S."/>
            <person name="Schroeter R."/>
            <person name="Scoffone F."/>
            <person name="Sekiguchi J."/>
            <person name="Sekowska A."/>
            <person name="Seror S.J."/>
            <person name="Serror P."/>
            <person name="Shin B.-S."/>
            <person name="Soldo B."/>
            <person name="Sorokin A."/>
            <person name="Tacconi E."/>
            <person name="Takagi T."/>
            <person name="Takahashi H."/>
            <person name="Takemaru K."/>
            <person name="Takeuchi M."/>
            <person name="Tamakoshi A."/>
            <person name="Tanaka T."/>
            <person name="Terpstra P."/>
            <person name="Tognoni A."/>
            <person name="Tosato V."/>
            <person name="Uchiyama S."/>
            <person name="Vandenbol M."/>
            <person name="Vannier F."/>
            <person name="Vassarotti A."/>
            <person name="Viari A."/>
            <person name="Wambutt R."/>
            <person name="Wedler E."/>
            <person name="Wedler H."/>
            <person name="Weitzenegger T."/>
            <person name="Winters P."/>
            <person name="Wipat A."/>
            <person name="Yamamoto H."/>
            <person name="Yamane K."/>
            <person name="Yasumoto K."/>
            <person name="Yata K."/>
            <person name="Yoshida K."/>
            <person name="Yoshikawa H.-F."/>
            <person name="Zumstein E."/>
            <person name="Yoshikawa H."/>
            <person name="Danchin A."/>
        </authorList>
    </citation>
    <scope>NUCLEOTIDE SEQUENCE [LARGE SCALE GENOMIC DNA]</scope>
    <source>
        <strain>168</strain>
    </source>
</reference>
<reference key="3">
    <citation type="journal article" date="2002" name="Proc. Natl. Acad. Sci. U.S.A.">
        <title>An expanded view of bacterial DNA replication.</title>
        <authorList>
            <person name="Noirot-Gros M.-F."/>
            <person name="Dervyn E."/>
            <person name="Wu L.J."/>
            <person name="Mervelet P."/>
            <person name="Errington J."/>
            <person name="Ehrlich S.D."/>
            <person name="Noirot P."/>
        </authorList>
    </citation>
    <scope>INTERACTION WITH YABA</scope>
    <source>
        <strain>168</strain>
    </source>
</reference>
<name>TLPA_BACSU</name>
<organism>
    <name type="scientific">Bacillus subtilis (strain 168)</name>
    <dbReference type="NCBI Taxonomy" id="224308"/>
    <lineage>
        <taxon>Bacteria</taxon>
        <taxon>Bacillati</taxon>
        <taxon>Bacillota</taxon>
        <taxon>Bacilli</taxon>
        <taxon>Bacillales</taxon>
        <taxon>Bacillaceae</taxon>
        <taxon>Bacillus</taxon>
    </lineage>
</organism>
<sequence>MKKTLTTIRRSSIARRLIISFLLILIVPITALSVSAYQSAVASLDVQMTQSAKENVQILDHIIDDKISTTEKSLAYFSDWATAEKFQDKKKTELKQEFKQFIQMNDNVAAVFSSGKDGDFTRYPYADMPSDFNALERDWYKEAMANKGKTIVTEPYESISSGKMVVTIARQTVDGSGVVAIDMKIDDLVTTAKGINIGKEGYAFILSQNKKVIAYSGEKAGTELKGDWVDKLYKDKSGDFEYTYKGKKKKMAFATSQTTGWKISGTMYANEIHDAASRVLIMASIVLAIAIGAGMTAIYFVIRSITKPLRRIVASAEKISEGDLTETIEINSKDELGVLSESFNHMAHSLRSLIHGIKDSVEHVASSSEELTASADQTSRATEHITMAIEQFSNGSESQSEKIETTTEQINEMNDGLAELARAAAVITETSADSTEVSSKGETLVQKTAGQMNTIDHSVKAAEQVVKGLEIKSKDITNILRVINGIADQTNLLALNAAIEAARAGEYGRGFSVVAEEVRKLAVQSADSAKEIESLISEIVKEIHTSLNVLQSVNKEVETGLVMTDETKQSFKHISQMTNQIASELQNMNATVEELSAGAQEISAASNDITAISKESSDGIQDIAASAEEQLASMEEISSSALTLERMSEELRDLTKQFKVDK</sequence>